<organism>
    <name type="scientific">Synechocystis sp. (strain ATCC 27184 / PCC 6803 / Kazusa)</name>
    <dbReference type="NCBI Taxonomy" id="1111708"/>
    <lineage>
        <taxon>Bacteria</taxon>
        <taxon>Bacillati</taxon>
        <taxon>Cyanobacteriota</taxon>
        <taxon>Cyanophyceae</taxon>
        <taxon>Synechococcales</taxon>
        <taxon>Merismopediaceae</taxon>
        <taxon>Synechocystis</taxon>
    </lineage>
</organism>
<name>ARGJ_SYNY3</name>
<dbReference type="EC" id="2.3.1.35" evidence="1"/>
<dbReference type="EC" id="2.3.1.1" evidence="1"/>
<dbReference type="EMBL" id="BA000022">
    <property type="protein sequence ID" value="BAA18208.1"/>
    <property type="status" value="ALT_INIT"/>
    <property type="molecule type" value="Genomic_DNA"/>
</dbReference>
<dbReference type="PIR" id="S75647">
    <property type="entry name" value="S75647"/>
</dbReference>
<dbReference type="SMR" id="P74122"/>
<dbReference type="FunCoup" id="P74122">
    <property type="interactions" value="378"/>
</dbReference>
<dbReference type="STRING" id="1148.gene:10499081"/>
<dbReference type="MEROPS" id="T05.002"/>
<dbReference type="PaxDb" id="1148-1653293"/>
<dbReference type="EnsemblBacteria" id="BAA18208">
    <property type="protein sequence ID" value="BAA18208"/>
    <property type="gene ID" value="BAA18208"/>
</dbReference>
<dbReference type="KEGG" id="syn:sll1883"/>
<dbReference type="eggNOG" id="COG1364">
    <property type="taxonomic scope" value="Bacteria"/>
</dbReference>
<dbReference type="InParanoid" id="P74122"/>
<dbReference type="PhylomeDB" id="P74122"/>
<dbReference type="UniPathway" id="UPA00068">
    <property type="reaction ID" value="UER00106"/>
</dbReference>
<dbReference type="UniPathway" id="UPA00068">
    <property type="reaction ID" value="UER00111"/>
</dbReference>
<dbReference type="Proteomes" id="UP000001425">
    <property type="component" value="Chromosome"/>
</dbReference>
<dbReference type="GO" id="GO:0005737">
    <property type="term" value="C:cytoplasm"/>
    <property type="evidence" value="ECO:0007669"/>
    <property type="project" value="UniProtKB-SubCell"/>
</dbReference>
<dbReference type="GO" id="GO:0004358">
    <property type="term" value="F:glutamate N-acetyltransferase activity"/>
    <property type="evidence" value="ECO:0007669"/>
    <property type="project" value="UniProtKB-UniRule"/>
</dbReference>
<dbReference type="GO" id="GO:0004042">
    <property type="term" value="F:L-glutamate N-acetyltransferase activity"/>
    <property type="evidence" value="ECO:0000318"/>
    <property type="project" value="GO_Central"/>
</dbReference>
<dbReference type="GO" id="GO:0006526">
    <property type="term" value="P:L-arginine biosynthetic process"/>
    <property type="evidence" value="ECO:0007669"/>
    <property type="project" value="UniProtKB-UniRule"/>
</dbReference>
<dbReference type="GO" id="GO:0006592">
    <property type="term" value="P:ornithine biosynthetic process"/>
    <property type="evidence" value="ECO:0000318"/>
    <property type="project" value="GO_Central"/>
</dbReference>
<dbReference type="CDD" id="cd02152">
    <property type="entry name" value="OAT"/>
    <property type="match status" value="1"/>
</dbReference>
<dbReference type="FunFam" id="3.10.20.340:FF:000001">
    <property type="entry name" value="Arginine biosynthesis bifunctional protein ArgJ, chloroplastic"/>
    <property type="match status" value="1"/>
</dbReference>
<dbReference type="FunFam" id="3.60.70.12:FF:000001">
    <property type="entry name" value="Arginine biosynthesis bifunctional protein ArgJ, chloroplastic"/>
    <property type="match status" value="1"/>
</dbReference>
<dbReference type="Gene3D" id="3.10.20.340">
    <property type="entry name" value="ArgJ beta chain, C-terminal domain"/>
    <property type="match status" value="1"/>
</dbReference>
<dbReference type="Gene3D" id="3.60.70.12">
    <property type="entry name" value="L-amino peptidase D-ALA esterase/amidase"/>
    <property type="match status" value="1"/>
</dbReference>
<dbReference type="HAMAP" id="MF_01106">
    <property type="entry name" value="ArgJ"/>
    <property type="match status" value="1"/>
</dbReference>
<dbReference type="InterPro" id="IPR002813">
    <property type="entry name" value="Arg_biosynth_ArgJ"/>
</dbReference>
<dbReference type="InterPro" id="IPR016117">
    <property type="entry name" value="ArgJ-like_dom_sf"/>
</dbReference>
<dbReference type="InterPro" id="IPR042195">
    <property type="entry name" value="ArgJ_beta_C"/>
</dbReference>
<dbReference type="NCBIfam" id="TIGR00120">
    <property type="entry name" value="ArgJ"/>
    <property type="match status" value="1"/>
</dbReference>
<dbReference type="NCBIfam" id="NF003802">
    <property type="entry name" value="PRK05388.1"/>
    <property type="match status" value="1"/>
</dbReference>
<dbReference type="PANTHER" id="PTHR23100">
    <property type="entry name" value="ARGININE BIOSYNTHESIS BIFUNCTIONAL PROTEIN ARGJ"/>
    <property type="match status" value="1"/>
</dbReference>
<dbReference type="PANTHER" id="PTHR23100:SF0">
    <property type="entry name" value="ARGININE BIOSYNTHESIS BIFUNCTIONAL PROTEIN ARGJ, MITOCHONDRIAL"/>
    <property type="match status" value="1"/>
</dbReference>
<dbReference type="Pfam" id="PF01960">
    <property type="entry name" value="ArgJ"/>
    <property type="match status" value="1"/>
</dbReference>
<dbReference type="SUPFAM" id="SSF56266">
    <property type="entry name" value="DmpA/ArgJ-like"/>
    <property type="match status" value="1"/>
</dbReference>
<evidence type="ECO:0000255" key="1">
    <source>
        <dbReference type="HAMAP-Rule" id="MF_01106"/>
    </source>
</evidence>
<evidence type="ECO:0000305" key="2"/>
<proteinExistence type="inferred from homology"/>
<sequence length="413" mass="43320">MADWQVIEGNITAPKGFKAAGITAGLKPSGSPDLSLIYSETEAIAAGVFTTSQVRAACVDYCRQRLQAKASARAILVNSGQANAGTGKQGWDDAVESAQLLAQGLNISPESILLASTGVIGQRIKMEQLRQGITPLIQSLAPNGGDKAARAIMTTDLVPKTIALETEIDGRPVRMGGIAKGSGMIHPNMATMLAFVTCDAAVSTALWQQMLSRATQKTFNQVTVDGDTSTNDSLFALANGESRTAAITEMGPNAEKLEAMLTAVCQHLAKAIARDGEGATCLMEIQVTGAPDDQSARAVARTIAGSSLVKSAVFGRDPNWGRIAGAAGRAGVKFDQNNLLIKLGNYVLMDQGQPLEFDRPGASNYLKQAASGAYLEQDTVLIQVDLGTGSGQGTAWGCDLSYDYVRINADYTT</sequence>
<accession>P74122</accession>
<protein>
    <recommendedName>
        <fullName evidence="1">Arginine biosynthesis bifunctional protein ArgJ</fullName>
    </recommendedName>
    <domain>
        <recommendedName>
            <fullName evidence="1">Glutamate N-acetyltransferase</fullName>
            <ecNumber evidence="1">2.3.1.35</ecNumber>
        </recommendedName>
        <alternativeName>
            <fullName evidence="1">Ornithine acetyltransferase</fullName>
            <shortName evidence="1">OATase</shortName>
        </alternativeName>
        <alternativeName>
            <fullName evidence="1">Ornithine transacetylase</fullName>
        </alternativeName>
    </domain>
    <domain>
        <recommendedName>
            <fullName evidence="1">Amino-acid acetyltransferase</fullName>
            <ecNumber evidence="1">2.3.1.1</ecNumber>
        </recommendedName>
        <alternativeName>
            <fullName evidence="1">N-acetylglutamate synthase</fullName>
            <shortName evidence="1">AGSase</shortName>
        </alternativeName>
    </domain>
    <component>
        <recommendedName>
            <fullName evidence="1">Arginine biosynthesis bifunctional protein ArgJ alpha chain</fullName>
        </recommendedName>
    </component>
    <component>
        <recommendedName>
            <fullName evidence="1">Arginine biosynthesis bifunctional protein ArgJ beta chain</fullName>
        </recommendedName>
    </component>
</protein>
<feature type="chain" id="PRO_0000002255" description="Arginine biosynthesis bifunctional protein ArgJ alpha chain" evidence="1">
    <location>
        <begin position="1"/>
        <end position="190"/>
    </location>
</feature>
<feature type="chain" id="PRO_0000002256" description="Arginine biosynthesis bifunctional protein ArgJ beta chain" evidence="1">
    <location>
        <begin position="191"/>
        <end position="413"/>
    </location>
</feature>
<feature type="active site" description="Nucleophile" evidence="1">
    <location>
        <position position="191"/>
    </location>
</feature>
<feature type="binding site" evidence="1">
    <location>
        <position position="154"/>
    </location>
    <ligand>
        <name>substrate</name>
    </ligand>
</feature>
<feature type="binding site" evidence="1">
    <location>
        <position position="180"/>
    </location>
    <ligand>
        <name>substrate</name>
    </ligand>
</feature>
<feature type="binding site" evidence="1">
    <location>
        <position position="191"/>
    </location>
    <ligand>
        <name>substrate</name>
    </ligand>
</feature>
<feature type="binding site" evidence="1">
    <location>
        <position position="277"/>
    </location>
    <ligand>
        <name>substrate</name>
    </ligand>
</feature>
<feature type="binding site" evidence="1">
    <location>
        <position position="408"/>
    </location>
    <ligand>
        <name>substrate</name>
    </ligand>
</feature>
<feature type="binding site" evidence="1">
    <location>
        <position position="413"/>
    </location>
    <ligand>
        <name>substrate</name>
    </ligand>
</feature>
<feature type="site" description="Involved in the stabilization of negative charge on the oxyanion by the formation of the oxyanion hole" evidence="1">
    <location>
        <position position="117"/>
    </location>
</feature>
<feature type="site" description="Involved in the stabilization of negative charge on the oxyanion by the formation of the oxyanion hole" evidence="1">
    <location>
        <position position="118"/>
    </location>
</feature>
<feature type="site" description="Cleavage; by autolysis" evidence="1">
    <location>
        <begin position="190"/>
        <end position="191"/>
    </location>
</feature>
<comment type="function">
    <text evidence="1">Catalyzes two activities which are involved in the cyclic version of arginine biosynthesis: the synthesis of N-acetylglutamate from glutamate and acetyl-CoA as the acetyl donor, and of ornithine by transacetylation between N(2)-acetylornithine and glutamate.</text>
</comment>
<comment type="catalytic activity">
    <reaction evidence="1">
        <text>N(2)-acetyl-L-ornithine + L-glutamate = N-acetyl-L-glutamate + L-ornithine</text>
        <dbReference type="Rhea" id="RHEA:15349"/>
        <dbReference type="ChEBI" id="CHEBI:29985"/>
        <dbReference type="ChEBI" id="CHEBI:44337"/>
        <dbReference type="ChEBI" id="CHEBI:46911"/>
        <dbReference type="ChEBI" id="CHEBI:57805"/>
        <dbReference type="EC" id="2.3.1.35"/>
    </reaction>
</comment>
<comment type="catalytic activity">
    <reaction evidence="1">
        <text>L-glutamate + acetyl-CoA = N-acetyl-L-glutamate + CoA + H(+)</text>
        <dbReference type="Rhea" id="RHEA:24292"/>
        <dbReference type="ChEBI" id="CHEBI:15378"/>
        <dbReference type="ChEBI" id="CHEBI:29985"/>
        <dbReference type="ChEBI" id="CHEBI:44337"/>
        <dbReference type="ChEBI" id="CHEBI:57287"/>
        <dbReference type="ChEBI" id="CHEBI:57288"/>
        <dbReference type="EC" id="2.3.1.1"/>
    </reaction>
</comment>
<comment type="pathway">
    <text evidence="1">Amino-acid biosynthesis; L-arginine biosynthesis; L-ornithine and N-acetyl-L-glutamate from L-glutamate and N(2)-acetyl-L-ornithine (cyclic): step 1/1.</text>
</comment>
<comment type="pathway">
    <text evidence="1">Amino-acid biosynthesis; L-arginine biosynthesis; N(2)-acetyl-L-ornithine from L-glutamate: step 1/4.</text>
</comment>
<comment type="subunit">
    <text evidence="1">Heterotetramer of two alpha and two beta chains.</text>
</comment>
<comment type="subcellular location">
    <subcellularLocation>
        <location evidence="1">Cytoplasm</location>
    </subcellularLocation>
</comment>
<comment type="similarity">
    <text evidence="1">Belongs to the ArgJ family.</text>
</comment>
<comment type="sequence caution" evidence="2">
    <conflict type="erroneous initiation">
        <sequence resource="EMBL-CDS" id="BAA18208"/>
    </conflict>
    <text>Extended N-terminus.</text>
</comment>
<gene>
    <name evidence="1" type="primary">argJ</name>
    <name type="ordered locus">sll1883</name>
</gene>
<reference key="1">
    <citation type="journal article" date="1996" name="DNA Res.">
        <title>Sequence analysis of the genome of the unicellular cyanobacterium Synechocystis sp. strain PCC6803. II. Sequence determination of the entire genome and assignment of potential protein-coding regions.</title>
        <authorList>
            <person name="Kaneko T."/>
            <person name="Sato S."/>
            <person name="Kotani H."/>
            <person name="Tanaka A."/>
            <person name="Asamizu E."/>
            <person name="Nakamura Y."/>
            <person name="Miyajima N."/>
            <person name="Hirosawa M."/>
            <person name="Sugiura M."/>
            <person name="Sasamoto S."/>
            <person name="Kimura T."/>
            <person name="Hosouchi T."/>
            <person name="Matsuno A."/>
            <person name="Muraki A."/>
            <person name="Nakazaki N."/>
            <person name="Naruo K."/>
            <person name="Okumura S."/>
            <person name="Shimpo S."/>
            <person name="Takeuchi C."/>
            <person name="Wada T."/>
            <person name="Watanabe A."/>
            <person name="Yamada M."/>
            <person name="Yasuda M."/>
            <person name="Tabata S."/>
        </authorList>
    </citation>
    <scope>NUCLEOTIDE SEQUENCE [LARGE SCALE GENOMIC DNA]</scope>
    <source>
        <strain>ATCC 27184 / PCC 6803 / Kazusa</strain>
    </source>
</reference>
<keyword id="KW-0012">Acyltransferase</keyword>
<keyword id="KW-0028">Amino-acid biosynthesis</keyword>
<keyword id="KW-0055">Arginine biosynthesis</keyword>
<keyword id="KW-0068">Autocatalytic cleavage</keyword>
<keyword id="KW-0963">Cytoplasm</keyword>
<keyword id="KW-0511">Multifunctional enzyme</keyword>
<keyword id="KW-1185">Reference proteome</keyword>
<keyword id="KW-0808">Transferase</keyword>